<sequence length="289" mass="32674">MKKVPGPIVLVEPLSGNTSLLIKVNEVLAVRRSRYQEIMVVETEDYGRALILDDYIQSSYYDEAFYHESLVHPAMVTHPAPRDVLILGGGEGATLREVLKHPTVEKAVMVDIDGDVVELSKRFLPQMHQGAFDSPRAEVVIEDGFVYVKRALEEGRKFDVVIMDLTDPYSSEIAKQLYTAEFINQIMKLLRGDGIMVTQAGNSFYFPEAYDMVLSAVKANFPVVAEYNVWIPSFGYAVNYILGSLKYDPRALPAEEVDKRLADRGVKTRFYTGRAHVALMNMPVYRRLR</sequence>
<proteinExistence type="inferred from homology"/>
<keyword id="KW-0963">Cytoplasm</keyword>
<keyword id="KW-0620">Polyamine biosynthesis</keyword>
<keyword id="KW-0745">Spermidine biosynthesis</keyword>
<keyword id="KW-0808">Transferase</keyword>
<evidence type="ECO:0000255" key="1">
    <source>
        <dbReference type="HAMAP-Rule" id="MF_00198"/>
    </source>
</evidence>
<protein>
    <recommendedName>
        <fullName evidence="1">Polyamine aminopropyltransferase</fullName>
    </recommendedName>
    <alternativeName>
        <fullName evidence="1">Putrescine aminopropyltransferase</fullName>
        <shortName evidence="1">PAPT</shortName>
    </alternativeName>
    <alternativeName>
        <fullName evidence="1">Spermidine synthase</fullName>
        <shortName evidence="1">SPDS</shortName>
        <shortName evidence="1">SPDSY</shortName>
        <ecNumber evidence="1">2.5.1.16</ecNumber>
    </alternativeName>
</protein>
<name>SPEE_PYRAR</name>
<dbReference type="EC" id="2.5.1.16" evidence="1"/>
<dbReference type="EMBL" id="CP000660">
    <property type="protein sequence ID" value="ABP49897.1"/>
    <property type="molecule type" value="Genomic_DNA"/>
</dbReference>
<dbReference type="SMR" id="A4WHN0"/>
<dbReference type="STRING" id="340102.Pars_0284"/>
<dbReference type="KEGG" id="pas:Pars_0284"/>
<dbReference type="HOGENOM" id="CLU_048199_0_1_2"/>
<dbReference type="OrthoDB" id="10538at2157"/>
<dbReference type="PhylomeDB" id="A4WHN0"/>
<dbReference type="UniPathway" id="UPA00248">
    <property type="reaction ID" value="UER00314"/>
</dbReference>
<dbReference type="Proteomes" id="UP000001567">
    <property type="component" value="Chromosome"/>
</dbReference>
<dbReference type="GO" id="GO:0005737">
    <property type="term" value="C:cytoplasm"/>
    <property type="evidence" value="ECO:0007669"/>
    <property type="project" value="UniProtKB-SubCell"/>
</dbReference>
<dbReference type="GO" id="GO:0004766">
    <property type="term" value="F:spermidine synthase activity"/>
    <property type="evidence" value="ECO:0007669"/>
    <property type="project" value="UniProtKB-UniRule"/>
</dbReference>
<dbReference type="GO" id="GO:0008295">
    <property type="term" value="P:spermidine biosynthetic process"/>
    <property type="evidence" value="ECO:0007669"/>
    <property type="project" value="UniProtKB-UniRule"/>
</dbReference>
<dbReference type="CDD" id="cd02440">
    <property type="entry name" value="AdoMet_MTases"/>
    <property type="match status" value="1"/>
</dbReference>
<dbReference type="FunFam" id="3.40.50.150:FF:000088">
    <property type="entry name" value="Polyamine aminopropyltransferase"/>
    <property type="match status" value="1"/>
</dbReference>
<dbReference type="Gene3D" id="2.30.140.10">
    <property type="entry name" value="Spermidine synthase, tetramerisation domain"/>
    <property type="match status" value="1"/>
</dbReference>
<dbReference type="Gene3D" id="3.40.50.150">
    <property type="entry name" value="Vaccinia Virus protein VP39"/>
    <property type="match status" value="1"/>
</dbReference>
<dbReference type="HAMAP" id="MF_00198">
    <property type="entry name" value="Spermidine_synth"/>
    <property type="match status" value="1"/>
</dbReference>
<dbReference type="InterPro" id="IPR030374">
    <property type="entry name" value="PABS"/>
</dbReference>
<dbReference type="InterPro" id="IPR030373">
    <property type="entry name" value="PABS_CS"/>
</dbReference>
<dbReference type="InterPro" id="IPR029063">
    <property type="entry name" value="SAM-dependent_MTases_sf"/>
</dbReference>
<dbReference type="InterPro" id="IPR001045">
    <property type="entry name" value="Spermi_synthase"/>
</dbReference>
<dbReference type="InterPro" id="IPR035246">
    <property type="entry name" value="Spermidine_synt_N"/>
</dbReference>
<dbReference type="InterPro" id="IPR037163">
    <property type="entry name" value="Spermidine_synt_N_sf"/>
</dbReference>
<dbReference type="NCBIfam" id="NF002010">
    <property type="entry name" value="PRK00811.1"/>
    <property type="match status" value="1"/>
</dbReference>
<dbReference type="PANTHER" id="PTHR11558:SF11">
    <property type="entry name" value="SPERMIDINE SYNTHASE"/>
    <property type="match status" value="1"/>
</dbReference>
<dbReference type="PANTHER" id="PTHR11558">
    <property type="entry name" value="SPERMIDINE/SPERMINE SYNTHASE"/>
    <property type="match status" value="1"/>
</dbReference>
<dbReference type="Pfam" id="PF17284">
    <property type="entry name" value="Spermine_synt_N"/>
    <property type="match status" value="1"/>
</dbReference>
<dbReference type="Pfam" id="PF01564">
    <property type="entry name" value="Spermine_synth"/>
    <property type="match status" value="1"/>
</dbReference>
<dbReference type="SUPFAM" id="SSF53335">
    <property type="entry name" value="S-adenosyl-L-methionine-dependent methyltransferases"/>
    <property type="match status" value="1"/>
</dbReference>
<dbReference type="PROSITE" id="PS01330">
    <property type="entry name" value="PABS_1"/>
    <property type="match status" value="1"/>
</dbReference>
<dbReference type="PROSITE" id="PS51006">
    <property type="entry name" value="PABS_2"/>
    <property type="match status" value="1"/>
</dbReference>
<accession>A4WHN0</accession>
<comment type="function">
    <text evidence="1">Catalyzes the irreversible transfer of a propylamine group from the amino donor S-adenosylmethioninamine (decarboxy-AdoMet) to putrescine (1,4-diaminobutane) to yield spermidine.</text>
</comment>
<comment type="catalytic activity">
    <reaction evidence="1">
        <text>S-adenosyl 3-(methylsulfanyl)propylamine + putrescine = S-methyl-5'-thioadenosine + spermidine + H(+)</text>
        <dbReference type="Rhea" id="RHEA:12721"/>
        <dbReference type="ChEBI" id="CHEBI:15378"/>
        <dbReference type="ChEBI" id="CHEBI:17509"/>
        <dbReference type="ChEBI" id="CHEBI:57443"/>
        <dbReference type="ChEBI" id="CHEBI:57834"/>
        <dbReference type="ChEBI" id="CHEBI:326268"/>
        <dbReference type="EC" id="2.5.1.16"/>
    </reaction>
</comment>
<comment type="pathway">
    <text evidence="1">Amine and polyamine biosynthesis; spermidine biosynthesis; spermidine from putrescine: step 1/1.</text>
</comment>
<comment type="subunit">
    <text evidence="1">Homodimer or homotetramer.</text>
</comment>
<comment type="subcellular location">
    <subcellularLocation>
        <location evidence="1">Cytoplasm</location>
    </subcellularLocation>
</comment>
<comment type="similarity">
    <text evidence="1">Belongs to the spermidine/spermine synthase family.</text>
</comment>
<gene>
    <name evidence="1" type="primary">speE</name>
    <name type="ordered locus">Pars_0284</name>
</gene>
<reference key="1">
    <citation type="submission" date="2007-04" db="EMBL/GenBank/DDBJ databases">
        <title>Complete sequence of Pyrobaculum arsenaticum DSM 13514.</title>
        <authorList>
            <consortium name="US DOE Joint Genome Institute"/>
            <person name="Copeland A."/>
            <person name="Lucas S."/>
            <person name="Lapidus A."/>
            <person name="Barry K."/>
            <person name="Glavina del Rio T."/>
            <person name="Dalin E."/>
            <person name="Tice H."/>
            <person name="Pitluck S."/>
            <person name="Chain P."/>
            <person name="Malfatti S."/>
            <person name="Shin M."/>
            <person name="Vergez L."/>
            <person name="Schmutz J."/>
            <person name="Larimer F."/>
            <person name="Land M."/>
            <person name="Hauser L."/>
            <person name="Kyrpides N."/>
            <person name="Mikhailova N."/>
            <person name="Cozen A.E."/>
            <person name="Fitz-Gibbon S.T."/>
            <person name="House C.H."/>
            <person name="Saltikov C."/>
            <person name="Lowe T.M."/>
            <person name="Richardson P."/>
        </authorList>
    </citation>
    <scope>NUCLEOTIDE SEQUENCE [LARGE SCALE GENOMIC DNA]</scope>
    <source>
        <strain>ATCC 700994 / DSM 13514 / JCM 11321 / PZ6</strain>
    </source>
</reference>
<feature type="chain" id="PRO_1000012012" description="Polyamine aminopropyltransferase">
    <location>
        <begin position="1"/>
        <end position="289"/>
    </location>
</feature>
<feature type="domain" description="PABS" evidence="1">
    <location>
        <begin position="5"/>
        <end position="245"/>
    </location>
</feature>
<feature type="active site" description="Proton acceptor" evidence="1">
    <location>
        <position position="164"/>
    </location>
</feature>
<feature type="binding site" evidence="1">
    <location>
        <position position="36"/>
    </location>
    <ligand>
        <name>S-methyl-5'-thioadenosine</name>
        <dbReference type="ChEBI" id="CHEBI:17509"/>
    </ligand>
</feature>
<feature type="binding site" evidence="1">
    <location>
        <position position="67"/>
    </location>
    <ligand>
        <name>spermidine</name>
        <dbReference type="ChEBI" id="CHEBI:57834"/>
    </ligand>
</feature>
<feature type="binding site" evidence="1">
    <location>
        <position position="91"/>
    </location>
    <ligand>
        <name>spermidine</name>
        <dbReference type="ChEBI" id="CHEBI:57834"/>
    </ligand>
</feature>
<feature type="binding site" evidence="1">
    <location>
        <position position="111"/>
    </location>
    <ligand>
        <name>S-methyl-5'-thioadenosine</name>
        <dbReference type="ChEBI" id="CHEBI:17509"/>
    </ligand>
</feature>
<feature type="binding site" evidence="1">
    <location>
        <begin position="143"/>
        <end position="144"/>
    </location>
    <ligand>
        <name>S-methyl-5'-thioadenosine</name>
        <dbReference type="ChEBI" id="CHEBI:17509"/>
    </ligand>
</feature>
<organism>
    <name type="scientific">Pyrobaculum arsenaticum (strain DSM 13514 / JCM 11321 / PZ6)</name>
    <dbReference type="NCBI Taxonomy" id="340102"/>
    <lineage>
        <taxon>Archaea</taxon>
        <taxon>Thermoproteota</taxon>
        <taxon>Thermoprotei</taxon>
        <taxon>Thermoproteales</taxon>
        <taxon>Thermoproteaceae</taxon>
        <taxon>Pyrobaculum</taxon>
    </lineage>
</organism>